<keyword id="KW-0903">Direct protein sequencing</keyword>
<keyword id="KW-1015">Disulfide bond</keyword>
<keyword id="KW-0872">Ion channel impairing toxin</keyword>
<keyword id="KW-0528">Neurotoxin</keyword>
<keyword id="KW-0964">Secreted</keyword>
<keyword id="KW-0800">Toxin</keyword>
<evidence type="ECO:0000250" key="1">
    <source>
        <dbReference type="UniProtKB" id="P0C248"/>
    </source>
</evidence>
<evidence type="ECO:0000250" key="2">
    <source>
        <dbReference type="UniProtKB" id="P0C250"/>
    </source>
</evidence>
<evidence type="ECO:0000250" key="3">
    <source>
        <dbReference type="UniProtKB" id="P62903"/>
    </source>
</evidence>
<evidence type="ECO:0000250" key="4">
    <source>
        <dbReference type="UniProtKB" id="P83047"/>
    </source>
</evidence>
<evidence type="ECO:0000269" key="5">
    <source>
    </source>
</evidence>
<evidence type="ECO:0000303" key="6">
    <source>
    </source>
</evidence>
<evidence type="ECO:0000305" key="7"/>
<evidence type="ECO:0000305" key="8">
    <source>
    </source>
</evidence>
<organism>
    <name type="scientific">Conus figulinus</name>
    <name type="common">Fig cone</name>
    <dbReference type="NCBI Taxonomy" id="101301"/>
    <lineage>
        <taxon>Eukaryota</taxon>
        <taxon>Metazoa</taxon>
        <taxon>Spiralia</taxon>
        <taxon>Lophotrochozoa</taxon>
        <taxon>Mollusca</taxon>
        <taxon>Gastropoda</taxon>
        <taxon>Caenogastropoda</taxon>
        <taxon>Neogastropoda</taxon>
        <taxon>Conoidea</taxon>
        <taxon>Conidae</taxon>
        <taxon>Conus</taxon>
        <taxon>Dendroconus</taxon>
    </lineage>
</organism>
<reference key="1">
    <citation type="journal article" date="2015" name="J. Pept. Sci.">
        <title>Novel M-Superfamily and T-Superfamily conotoxins and contryphans from the vermivorous snail Conus figulinus.</title>
        <authorList>
            <person name="Rajesh R.P."/>
        </authorList>
    </citation>
    <scope>PROTEIN SEQUENCE</scope>
    <scope>IDENTIFICATION BY MASS SPECTROMETRY</scope>
    <scope>MASS SPECTROMETRY</scope>
    <scope>SUBCELLULAR LOCATION</scope>
    <source>
        <tissue>Venom</tissue>
    </source>
</reference>
<accession>P0DP14</accession>
<protein>
    <recommendedName>
        <fullName evidence="6">Contryphan-Fic</fullName>
    </recommendedName>
    <component>
        <recommendedName>
            <fullName evidence="6">Contryphan-Fid</fullName>
        </recommendedName>
    </component>
</protein>
<feature type="peptide" id="PRO_0000439625" description="Contryphan-Fic" evidence="5">
    <location>
        <begin position="1"/>
        <end position="8"/>
    </location>
</feature>
<feature type="peptide" id="PRO_0000439626" description="Contryphan-Fid" evidence="5">
    <location>
        <begin position="2"/>
        <end position="8"/>
    </location>
</feature>
<feature type="disulfide bond" evidence="5">
    <location>
        <begin position="2"/>
        <end position="8"/>
    </location>
</feature>
<sequence>GCPWDPWC</sequence>
<name>COWC_CONFI</name>
<proteinExistence type="evidence at protein level"/>
<dbReference type="GO" id="GO:0005576">
    <property type="term" value="C:extracellular region"/>
    <property type="evidence" value="ECO:0007669"/>
    <property type="project" value="UniProtKB-SubCell"/>
</dbReference>
<dbReference type="GO" id="GO:0099106">
    <property type="term" value="F:ion channel regulator activity"/>
    <property type="evidence" value="ECO:0007669"/>
    <property type="project" value="UniProtKB-KW"/>
</dbReference>
<dbReference type="GO" id="GO:0090729">
    <property type="term" value="F:toxin activity"/>
    <property type="evidence" value="ECO:0007669"/>
    <property type="project" value="UniProtKB-KW"/>
</dbReference>
<dbReference type="InterPro" id="IPR011062">
    <property type="entry name" value="Contryphan_CS"/>
</dbReference>
<dbReference type="PROSITE" id="PS60027">
    <property type="entry name" value="CONTRYPHAN"/>
    <property type="match status" value="1"/>
</dbReference>
<comment type="function">
    <text evidence="1 2 3 4">Its target is unknown, but this toxin may modulate voltage-activated calcium channels (Cav) or calcium-dependent potassium channels (KCa).</text>
</comment>
<comment type="subcellular location">
    <subcellularLocation>
        <location evidence="5">Secreted</location>
    </subcellularLocation>
</comment>
<comment type="tissue specificity">
    <text evidence="8">Expressed by the venom duct.</text>
</comment>
<comment type="domain">
    <text evidence="7">The cysteine framework is C-C.</text>
</comment>
<comment type="PTM">
    <text evidence="5">These peptides are not hydroxylated and not amidated, and no D-amino acid are detected.</text>
</comment>
<comment type="mass spectrometry">
    <molecule>Contryphan-Fic</molecule>
</comment>
<comment type="mass spectrometry">
    <molecule>Contryphan-Fid</molecule>
</comment>
<comment type="similarity">
    <text evidence="7">Belongs to the O2 superfamily. Contryphan family.</text>
</comment>